<gene>
    <name evidence="1" type="primary">rplL</name>
    <name type="ordered locus">plu0438</name>
</gene>
<protein>
    <recommendedName>
        <fullName evidence="1">Large ribosomal subunit protein bL12</fullName>
    </recommendedName>
    <alternativeName>
        <fullName evidence="2">50S ribosomal protein L7/L12</fullName>
    </alternativeName>
</protein>
<dbReference type="EMBL" id="BX571860">
    <property type="protein sequence ID" value="CAE12733.1"/>
    <property type="molecule type" value="Genomic_DNA"/>
</dbReference>
<dbReference type="RefSeq" id="WP_011144824.1">
    <property type="nucleotide sequence ID" value="NC_005126.1"/>
</dbReference>
<dbReference type="SMR" id="Q7N9A5"/>
<dbReference type="STRING" id="243265.plu0438"/>
<dbReference type="GeneID" id="48846724"/>
<dbReference type="KEGG" id="plu:plu0438"/>
<dbReference type="eggNOG" id="COG0222">
    <property type="taxonomic scope" value="Bacteria"/>
</dbReference>
<dbReference type="HOGENOM" id="CLU_086499_3_2_6"/>
<dbReference type="OrthoDB" id="9811748at2"/>
<dbReference type="Proteomes" id="UP000002514">
    <property type="component" value="Chromosome"/>
</dbReference>
<dbReference type="GO" id="GO:0022625">
    <property type="term" value="C:cytosolic large ribosomal subunit"/>
    <property type="evidence" value="ECO:0007669"/>
    <property type="project" value="TreeGrafter"/>
</dbReference>
<dbReference type="GO" id="GO:0003729">
    <property type="term" value="F:mRNA binding"/>
    <property type="evidence" value="ECO:0007669"/>
    <property type="project" value="TreeGrafter"/>
</dbReference>
<dbReference type="GO" id="GO:0003735">
    <property type="term" value="F:structural constituent of ribosome"/>
    <property type="evidence" value="ECO:0007669"/>
    <property type="project" value="InterPro"/>
</dbReference>
<dbReference type="GO" id="GO:0006412">
    <property type="term" value="P:translation"/>
    <property type="evidence" value="ECO:0007669"/>
    <property type="project" value="UniProtKB-UniRule"/>
</dbReference>
<dbReference type="CDD" id="cd00387">
    <property type="entry name" value="Ribosomal_L7_L12"/>
    <property type="match status" value="1"/>
</dbReference>
<dbReference type="FunFam" id="3.30.1390.10:FF:000001">
    <property type="entry name" value="50S ribosomal protein L7/L12"/>
    <property type="match status" value="1"/>
</dbReference>
<dbReference type="Gene3D" id="3.30.1390.10">
    <property type="match status" value="1"/>
</dbReference>
<dbReference type="Gene3D" id="1.20.5.710">
    <property type="entry name" value="Single helix bin"/>
    <property type="match status" value="1"/>
</dbReference>
<dbReference type="HAMAP" id="MF_00368">
    <property type="entry name" value="Ribosomal_bL12"/>
    <property type="match status" value="1"/>
</dbReference>
<dbReference type="InterPro" id="IPR000206">
    <property type="entry name" value="Ribosomal_bL12"/>
</dbReference>
<dbReference type="InterPro" id="IPR013823">
    <property type="entry name" value="Ribosomal_bL12_C"/>
</dbReference>
<dbReference type="InterPro" id="IPR014719">
    <property type="entry name" value="Ribosomal_bL12_C/ClpS-like"/>
</dbReference>
<dbReference type="InterPro" id="IPR008932">
    <property type="entry name" value="Ribosomal_bL12_oligo"/>
</dbReference>
<dbReference type="InterPro" id="IPR036235">
    <property type="entry name" value="Ribosomal_bL12_oligo_N_sf"/>
</dbReference>
<dbReference type="NCBIfam" id="TIGR00855">
    <property type="entry name" value="L12"/>
    <property type="match status" value="1"/>
</dbReference>
<dbReference type="PANTHER" id="PTHR45987">
    <property type="entry name" value="39S RIBOSOMAL PROTEIN L12"/>
    <property type="match status" value="1"/>
</dbReference>
<dbReference type="PANTHER" id="PTHR45987:SF4">
    <property type="entry name" value="LARGE RIBOSOMAL SUBUNIT PROTEIN BL12M"/>
    <property type="match status" value="1"/>
</dbReference>
<dbReference type="Pfam" id="PF00542">
    <property type="entry name" value="Ribosomal_L12"/>
    <property type="match status" value="1"/>
</dbReference>
<dbReference type="Pfam" id="PF16320">
    <property type="entry name" value="Ribosomal_L12_N"/>
    <property type="match status" value="1"/>
</dbReference>
<dbReference type="SUPFAM" id="SSF54736">
    <property type="entry name" value="ClpS-like"/>
    <property type="match status" value="1"/>
</dbReference>
<dbReference type="SUPFAM" id="SSF48300">
    <property type="entry name" value="Ribosomal protein L7/12, oligomerisation (N-terminal) domain"/>
    <property type="match status" value="1"/>
</dbReference>
<reference key="1">
    <citation type="journal article" date="2003" name="Nat. Biotechnol.">
        <title>The genome sequence of the entomopathogenic bacterium Photorhabdus luminescens.</title>
        <authorList>
            <person name="Duchaud E."/>
            <person name="Rusniok C."/>
            <person name="Frangeul L."/>
            <person name="Buchrieser C."/>
            <person name="Givaudan A."/>
            <person name="Taourit S."/>
            <person name="Bocs S."/>
            <person name="Boursaux-Eude C."/>
            <person name="Chandler M."/>
            <person name="Charles J.-F."/>
            <person name="Dassa E."/>
            <person name="Derose R."/>
            <person name="Derzelle S."/>
            <person name="Freyssinet G."/>
            <person name="Gaudriault S."/>
            <person name="Medigue C."/>
            <person name="Lanois A."/>
            <person name="Powell K."/>
            <person name="Siguier P."/>
            <person name="Vincent R."/>
            <person name="Wingate V."/>
            <person name="Zouine M."/>
            <person name="Glaser P."/>
            <person name="Boemare N."/>
            <person name="Danchin A."/>
            <person name="Kunst F."/>
        </authorList>
    </citation>
    <scope>NUCLEOTIDE SEQUENCE [LARGE SCALE GENOMIC DNA]</scope>
    <source>
        <strain>DSM 15139 / CIP 105565 / TT01</strain>
    </source>
</reference>
<feature type="chain" id="PRO_0000243463" description="Large ribosomal subunit protein bL12">
    <location>
        <begin position="1"/>
        <end position="123"/>
    </location>
</feature>
<accession>Q7N9A5</accession>
<organism>
    <name type="scientific">Photorhabdus laumondii subsp. laumondii (strain DSM 15139 / CIP 105565 / TT01)</name>
    <name type="common">Photorhabdus luminescens subsp. laumondii</name>
    <dbReference type="NCBI Taxonomy" id="243265"/>
    <lineage>
        <taxon>Bacteria</taxon>
        <taxon>Pseudomonadati</taxon>
        <taxon>Pseudomonadota</taxon>
        <taxon>Gammaproteobacteria</taxon>
        <taxon>Enterobacterales</taxon>
        <taxon>Morganellaceae</taxon>
        <taxon>Photorhabdus</taxon>
    </lineage>
</organism>
<comment type="function">
    <text evidence="1">Forms part of the ribosomal stalk which helps the ribosome interact with GTP-bound translation factors. Is thus essential for accurate translation.</text>
</comment>
<comment type="subunit">
    <text evidence="1">Homodimer. Part of the ribosomal stalk of the 50S ribosomal subunit. Forms a multimeric L10(L12)X complex, where L10 forms an elongated spine to which 2 to 4 L12 dimers bind in a sequential fashion. Binds GTP-bound translation factors.</text>
</comment>
<comment type="similarity">
    <text evidence="1">Belongs to the bacterial ribosomal protein bL12 family.</text>
</comment>
<sequence length="123" mass="12488">MSINKEQILDAVATMSVMDVVELITAMEDKFGVSAAAAVAVAAGGAAEAVEEQTEFDVVLSAIGGNKVAVIKAVRGATGLGLKEAKDLVESAPNATLKEGISKDDAEALKKSLEEAGASVEIK</sequence>
<name>RL7_PHOLL</name>
<keyword id="KW-1185">Reference proteome</keyword>
<keyword id="KW-0687">Ribonucleoprotein</keyword>
<keyword id="KW-0689">Ribosomal protein</keyword>
<proteinExistence type="inferred from homology"/>
<evidence type="ECO:0000255" key="1">
    <source>
        <dbReference type="HAMAP-Rule" id="MF_00368"/>
    </source>
</evidence>
<evidence type="ECO:0000305" key="2"/>